<sequence length="405" mass="46286">MQYLILSLIFLIPSLGMLTGLSIAATVAFFLLSIIITGFISFIQKQEFNKKFFIKLYPRFGFDDIFCIINKIKTELLFTAWCFISCLFAVHPINSLVTFTKVFVLLFLRFVSNAVTFQNVLYIKNSLILGIITAILLFFIEYSSHGFLTRMFKTHFGLYMLDRGCALLSITTWVAIIILFSNGHNINSFILYIVVLYLLSISDSLASFLGFSIGGIIFILARLIKTIFFKLITISLITGSLLFPVIAKQIDPQNLSEKYLATQPSAAHRLFIWHFVANKIIIRPILGYGFASSKYIETGDNAMIDYRGEKLHPLPLHPHNNILQITLELGILGLALFLCLVYKYLKEIDNIKVSNFRAASYSCFINYYIIGMISYNIWQTWWILSGIWILVLMKLLVKPDIIIDN</sequence>
<gene>
    <name type="ordered locus">RP358</name>
</gene>
<organism>
    <name type="scientific">Rickettsia prowazekii (strain Madrid E)</name>
    <dbReference type="NCBI Taxonomy" id="272947"/>
    <lineage>
        <taxon>Bacteria</taxon>
        <taxon>Pseudomonadati</taxon>
        <taxon>Pseudomonadota</taxon>
        <taxon>Alphaproteobacteria</taxon>
        <taxon>Rickettsiales</taxon>
        <taxon>Rickettsiaceae</taxon>
        <taxon>Rickettsieae</taxon>
        <taxon>Rickettsia</taxon>
        <taxon>typhus group</taxon>
    </lineage>
</organism>
<accession>Q9ZDH0</accession>
<name>Y358_RICPR</name>
<comment type="subcellular location">
    <subcellularLocation>
        <location evidence="2">Membrane</location>
        <topology evidence="2">Multi-pass membrane protein</topology>
    </subcellularLocation>
</comment>
<comment type="similarity">
    <text evidence="2">Belongs to the O-antigen ligase family.</text>
</comment>
<feature type="chain" id="PRO_0000280992" description="Putative polysaccharide ligase RP358">
    <location>
        <begin position="1"/>
        <end position="405"/>
    </location>
</feature>
<feature type="transmembrane region" description="Helical" evidence="1">
    <location>
        <begin position="23"/>
        <end position="43"/>
    </location>
</feature>
<feature type="transmembrane region" description="Helical" evidence="1">
    <location>
        <begin position="77"/>
        <end position="97"/>
    </location>
</feature>
<feature type="transmembrane region" description="Helical" evidence="1">
    <location>
        <begin position="120"/>
        <end position="140"/>
    </location>
</feature>
<feature type="transmembrane region" description="Helical" evidence="1">
    <location>
        <begin position="156"/>
        <end position="178"/>
    </location>
</feature>
<feature type="transmembrane region" description="Helical" evidence="1">
    <location>
        <begin position="201"/>
        <end position="221"/>
    </location>
</feature>
<feature type="transmembrane region" description="Helical" evidence="1">
    <location>
        <begin position="227"/>
        <end position="247"/>
    </location>
</feature>
<feature type="transmembrane region" description="Helical" evidence="1">
    <location>
        <begin position="270"/>
        <end position="290"/>
    </location>
</feature>
<feature type="transmembrane region" description="Helical" evidence="1">
    <location>
        <begin position="322"/>
        <end position="342"/>
    </location>
</feature>
<feature type="transmembrane region" description="Helical" evidence="1">
    <location>
        <begin position="353"/>
        <end position="375"/>
    </location>
</feature>
<feature type="transmembrane region" description="Helical" evidence="1">
    <location>
        <begin position="377"/>
        <end position="397"/>
    </location>
</feature>
<protein>
    <recommendedName>
        <fullName>Putative polysaccharide ligase RP358</fullName>
    </recommendedName>
</protein>
<keyword id="KW-0472">Membrane</keyword>
<keyword id="KW-1185">Reference proteome</keyword>
<keyword id="KW-0812">Transmembrane</keyword>
<keyword id="KW-1133">Transmembrane helix</keyword>
<proteinExistence type="inferred from homology"/>
<dbReference type="EMBL" id="AJ235271">
    <property type="protein sequence ID" value="CAA14818.1"/>
    <property type="molecule type" value="Genomic_DNA"/>
</dbReference>
<dbReference type="PIR" id="H71692">
    <property type="entry name" value="H71692"/>
</dbReference>
<dbReference type="RefSeq" id="NP_220742.1">
    <property type="nucleotide sequence ID" value="NC_000963.1"/>
</dbReference>
<dbReference type="RefSeq" id="WP_004597496.1">
    <property type="nucleotide sequence ID" value="NC_000963.1"/>
</dbReference>
<dbReference type="STRING" id="272947.gene:17555438"/>
<dbReference type="EnsemblBacteria" id="CAA14818">
    <property type="protein sequence ID" value="CAA14818"/>
    <property type="gene ID" value="CAA14818"/>
</dbReference>
<dbReference type="KEGG" id="rpr:RP358"/>
<dbReference type="PATRIC" id="fig|272947.5.peg.368"/>
<dbReference type="eggNOG" id="COG3307">
    <property type="taxonomic scope" value="Bacteria"/>
</dbReference>
<dbReference type="HOGENOM" id="CLU_668825_0_0_5"/>
<dbReference type="OrthoDB" id="8050531at2"/>
<dbReference type="Proteomes" id="UP000002480">
    <property type="component" value="Chromosome"/>
</dbReference>
<dbReference type="GO" id="GO:0016020">
    <property type="term" value="C:membrane"/>
    <property type="evidence" value="ECO:0007669"/>
    <property type="project" value="UniProtKB-SubCell"/>
</dbReference>
<dbReference type="InterPro" id="IPR007016">
    <property type="entry name" value="O-antigen_ligase-rel_domated"/>
</dbReference>
<dbReference type="InterPro" id="IPR051533">
    <property type="entry name" value="WaaL-like"/>
</dbReference>
<dbReference type="PANTHER" id="PTHR37422:SF13">
    <property type="entry name" value="LIPOPOLYSACCHARIDE BIOSYNTHESIS PROTEIN PA4999-RELATED"/>
    <property type="match status" value="1"/>
</dbReference>
<dbReference type="PANTHER" id="PTHR37422">
    <property type="entry name" value="TEICHURONIC ACID BIOSYNTHESIS PROTEIN TUAE"/>
    <property type="match status" value="1"/>
</dbReference>
<dbReference type="Pfam" id="PF04932">
    <property type="entry name" value="Wzy_C"/>
    <property type="match status" value="1"/>
</dbReference>
<reference key="1">
    <citation type="journal article" date="1998" name="Nature">
        <title>The genome sequence of Rickettsia prowazekii and the origin of mitochondria.</title>
        <authorList>
            <person name="Andersson S.G.E."/>
            <person name="Zomorodipour A."/>
            <person name="Andersson J.O."/>
            <person name="Sicheritz-Ponten T."/>
            <person name="Alsmark U.C.M."/>
            <person name="Podowski R.M."/>
            <person name="Naeslund A.K."/>
            <person name="Eriksson A.-S."/>
            <person name="Winkler H.H."/>
            <person name="Kurland C.G."/>
        </authorList>
    </citation>
    <scope>NUCLEOTIDE SEQUENCE [LARGE SCALE GENOMIC DNA]</scope>
    <source>
        <strain>Madrid E</strain>
    </source>
</reference>
<evidence type="ECO:0000255" key="1"/>
<evidence type="ECO:0000305" key="2"/>